<gene>
    <name evidence="1" type="primary">dapE</name>
    <name type="ordered locus">PP_1525</name>
    <name type="ORF">PP1525</name>
</gene>
<organism>
    <name type="scientific">Pseudomonas putida (strain ATCC 47054 / DSM 6125 / CFBP 8728 / NCIMB 11950 / KT2440)</name>
    <dbReference type="NCBI Taxonomy" id="160488"/>
    <lineage>
        <taxon>Bacteria</taxon>
        <taxon>Pseudomonadati</taxon>
        <taxon>Pseudomonadota</taxon>
        <taxon>Gammaproteobacteria</taxon>
        <taxon>Pseudomonadales</taxon>
        <taxon>Pseudomonadaceae</taxon>
        <taxon>Pseudomonas</taxon>
    </lineage>
</organism>
<feature type="chain" id="PRO_0000375663" description="Succinyl-diaminopimelate desuccinylase">
    <location>
        <begin position="1"/>
        <end position="383"/>
    </location>
</feature>
<feature type="active site" evidence="1">
    <location>
        <position position="75"/>
    </location>
</feature>
<feature type="active site" description="Proton acceptor" evidence="1">
    <location>
        <position position="141"/>
    </location>
</feature>
<feature type="binding site" evidence="1">
    <location>
        <position position="73"/>
    </location>
    <ligand>
        <name>Zn(2+)</name>
        <dbReference type="ChEBI" id="CHEBI:29105"/>
        <label>1</label>
    </ligand>
</feature>
<feature type="binding site" evidence="1">
    <location>
        <position position="107"/>
    </location>
    <ligand>
        <name>Zn(2+)</name>
        <dbReference type="ChEBI" id="CHEBI:29105"/>
        <label>1</label>
    </ligand>
</feature>
<feature type="binding site" evidence="1">
    <location>
        <position position="107"/>
    </location>
    <ligand>
        <name>Zn(2+)</name>
        <dbReference type="ChEBI" id="CHEBI:29105"/>
        <label>2</label>
    </ligand>
</feature>
<feature type="binding site" evidence="1">
    <location>
        <position position="142"/>
    </location>
    <ligand>
        <name>Zn(2+)</name>
        <dbReference type="ChEBI" id="CHEBI:29105"/>
        <label>2</label>
    </ligand>
</feature>
<feature type="binding site" evidence="1">
    <location>
        <position position="170"/>
    </location>
    <ligand>
        <name>Zn(2+)</name>
        <dbReference type="ChEBI" id="CHEBI:29105"/>
        <label>1</label>
    </ligand>
</feature>
<feature type="binding site" evidence="1">
    <location>
        <position position="356"/>
    </location>
    <ligand>
        <name>Zn(2+)</name>
        <dbReference type="ChEBI" id="CHEBI:29105"/>
        <label>2</label>
    </ligand>
</feature>
<comment type="function">
    <text evidence="1">Catalyzes the hydrolysis of N-succinyl-L,L-diaminopimelic acid (SDAP), forming succinate and LL-2,6-diaminopimelate (DAP), an intermediate involved in the bacterial biosynthesis of lysine and meso-diaminopimelic acid, an essential component of bacterial cell walls.</text>
</comment>
<comment type="catalytic activity">
    <reaction evidence="1">
        <text>N-succinyl-(2S,6S)-2,6-diaminopimelate + H2O = (2S,6S)-2,6-diaminopimelate + succinate</text>
        <dbReference type="Rhea" id="RHEA:22608"/>
        <dbReference type="ChEBI" id="CHEBI:15377"/>
        <dbReference type="ChEBI" id="CHEBI:30031"/>
        <dbReference type="ChEBI" id="CHEBI:57609"/>
        <dbReference type="ChEBI" id="CHEBI:58087"/>
        <dbReference type="EC" id="3.5.1.18"/>
    </reaction>
</comment>
<comment type="cofactor">
    <cofactor evidence="1">
        <name>Zn(2+)</name>
        <dbReference type="ChEBI" id="CHEBI:29105"/>
    </cofactor>
    <cofactor evidence="1">
        <name>Co(2+)</name>
        <dbReference type="ChEBI" id="CHEBI:48828"/>
    </cofactor>
    <text evidence="1">Binds 2 Zn(2+) or Co(2+) ions per subunit.</text>
</comment>
<comment type="pathway">
    <text evidence="1">Amino-acid biosynthesis; L-lysine biosynthesis via DAP pathway; LL-2,6-diaminopimelate from (S)-tetrahydrodipicolinate (succinylase route): step 3/3.</text>
</comment>
<comment type="subunit">
    <text evidence="1">Homodimer.</text>
</comment>
<comment type="similarity">
    <text evidence="1">Belongs to the peptidase M20A family. DapE subfamily.</text>
</comment>
<protein>
    <recommendedName>
        <fullName evidence="1">Succinyl-diaminopimelate desuccinylase</fullName>
        <shortName evidence="1">SDAP desuccinylase</shortName>
        <ecNumber evidence="1">3.5.1.18</ecNumber>
    </recommendedName>
    <alternativeName>
        <fullName evidence="1">N-succinyl-LL-2,6-diaminoheptanedioate amidohydrolase</fullName>
    </alternativeName>
</protein>
<keyword id="KW-0028">Amino-acid biosynthesis</keyword>
<keyword id="KW-0170">Cobalt</keyword>
<keyword id="KW-0220">Diaminopimelate biosynthesis</keyword>
<keyword id="KW-0378">Hydrolase</keyword>
<keyword id="KW-0457">Lysine biosynthesis</keyword>
<keyword id="KW-0479">Metal-binding</keyword>
<keyword id="KW-1185">Reference proteome</keyword>
<keyword id="KW-0862">Zinc</keyword>
<sequence length="383" mass="41239">MTAPAELSPTLQLACDLIRRPSVTPVDADCQAQMMNRLGAVGFQLEPMRIEDVDNFWATHGSQDGPVLCFAGHTDVVPTGPVQQWQHEPFEALIDADGMLCGRGAADMKGSLASMVIASERFVQDYPNHRGKVAFLITSDEEGPAHHGTKAVVERLKARNERLDWCIVGEPSSTTLLGDVVKNGRRGSLGAKLTIRGKQGHVAYPHLARNPIHLAAPALAELAAEHWDEGNAFFPPTSFQISNLNSGTGATNVVPGELTALFNFRFSTESTVEGLQARVSAILDKHELDWSVDWALSGLPFLTEPGELLDAVAASIKGVTGRDTQPSTSGGTSDGRFIATMGTQVVELGPVNATIHQVDERILASDLDLLTEIYYQTLVRLLA</sequence>
<accession>Q88MP5</accession>
<name>DAPE_PSEPK</name>
<dbReference type="EC" id="3.5.1.18" evidence="1"/>
<dbReference type="EMBL" id="AE015451">
    <property type="protein sequence ID" value="AAN67146.1"/>
    <property type="molecule type" value="Genomic_DNA"/>
</dbReference>
<dbReference type="RefSeq" id="NP_743682.1">
    <property type="nucleotide sequence ID" value="NC_002947.4"/>
</dbReference>
<dbReference type="RefSeq" id="WP_004574734.1">
    <property type="nucleotide sequence ID" value="NZ_CP169744.1"/>
</dbReference>
<dbReference type="SMR" id="Q88MP5"/>
<dbReference type="STRING" id="160488.PP_1525"/>
<dbReference type="PaxDb" id="160488-PP_1525"/>
<dbReference type="GeneID" id="83681942"/>
<dbReference type="KEGG" id="ppu:PP_1525"/>
<dbReference type="PATRIC" id="fig|160488.4.peg.1614"/>
<dbReference type="eggNOG" id="COG0624">
    <property type="taxonomic scope" value="Bacteria"/>
</dbReference>
<dbReference type="HOGENOM" id="CLU_021802_4_0_6"/>
<dbReference type="OrthoDB" id="9809784at2"/>
<dbReference type="PhylomeDB" id="Q88MP5"/>
<dbReference type="BioCyc" id="PPUT160488:G1G01-1616-MONOMER"/>
<dbReference type="UniPathway" id="UPA00034">
    <property type="reaction ID" value="UER00021"/>
</dbReference>
<dbReference type="Proteomes" id="UP000000556">
    <property type="component" value="Chromosome"/>
</dbReference>
<dbReference type="GO" id="GO:0008777">
    <property type="term" value="F:acetylornithine deacetylase activity"/>
    <property type="evidence" value="ECO:0007669"/>
    <property type="project" value="TreeGrafter"/>
</dbReference>
<dbReference type="GO" id="GO:0050897">
    <property type="term" value="F:cobalt ion binding"/>
    <property type="evidence" value="ECO:0007669"/>
    <property type="project" value="UniProtKB-UniRule"/>
</dbReference>
<dbReference type="GO" id="GO:0009014">
    <property type="term" value="F:succinyl-diaminopimelate desuccinylase activity"/>
    <property type="evidence" value="ECO:0007669"/>
    <property type="project" value="UniProtKB-UniRule"/>
</dbReference>
<dbReference type="GO" id="GO:0008270">
    <property type="term" value="F:zinc ion binding"/>
    <property type="evidence" value="ECO:0007669"/>
    <property type="project" value="UniProtKB-UniRule"/>
</dbReference>
<dbReference type="GO" id="GO:0019877">
    <property type="term" value="P:diaminopimelate biosynthetic process"/>
    <property type="evidence" value="ECO:0007669"/>
    <property type="project" value="UniProtKB-UniRule"/>
</dbReference>
<dbReference type="GO" id="GO:0006526">
    <property type="term" value="P:L-arginine biosynthetic process"/>
    <property type="evidence" value="ECO:0007669"/>
    <property type="project" value="TreeGrafter"/>
</dbReference>
<dbReference type="GO" id="GO:0009089">
    <property type="term" value="P:lysine biosynthetic process via diaminopimelate"/>
    <property type="evidence" value="ECO:0007669"/>
    <property type="project" value="UniProtKB-UniRule"/>
</dbReference>
<dbReference type="CDD" id="cd03891">
    <property type="entry name" value="M20_DapE_proteobac"/>
    <property type="match status" value="1"/>
</dbReference>
<dbReference type="FunFam" id="3.30.70.360:FF:000011">
    <property type="entry name" value="Succinyl-diaminopimelate desuccinylase"/>
    <property type="match status" value="1"/>
</dbReference>
<dbReference type="FunFam" id="3.40.630.10:FF:000005">
    <property type="entry name" value="Succinyl-diaminopimelate desuccinylase"/>
    <property type="match status" value="1"/>
</dbReference>
<dbReference type="Gene3D" id="1.10.150.900">
    <property type="match status" value="1"/>
</dbReference>
<dbReference type="Gene3D" id="3.30.70.360">
    <property type="match status" value="1"/>
</dbReference>
<dbReference type="Gene3D" id="3.40.630.10">
    <property type="entry name" value="Zn peptidases"/>
    <property type="match status" value="1"/>
</dbReference>
<dbReference type="HAMAP" id="MF_01690">
    <property type="entry name" value="DapE"/>
    <property type="match status" value="1"/>
</dbReference>
<dbReference type="InterPro" id="IPR001261">
    <property type="entry name" value="ArgE/DapE_CS"/>
</dbReference>
<dbReference type="InterPro" id="IPR036264">
    <property type="entry name" value="Bact_exopeptidase_dim_dom"/>
</dbReference>
<dbReference type="InterPro" id="IPR005941">
    <property type="entry name" value="DapE_proteobac"/>
</dbReference>
<dbReference type="InterPro" id="IPR002933">
    <property type="entry name" value="Peptidase_M20"/>
</dbReference>
<dbReference type="InterPro" id="IPR011650">
    <property type="entry name" value="Peptidase_M20_dimer"/>
</dbReference>
<dbReference type="InterPro" id="IPR050072">
    <property type="entry name" value="Peptidase_M20A"/>
</dbReference>
<dbReference type="NCBIfam" id="TIGR01246">
    <property type="entry name" value="dapE_proteo"/>
    <property type="match status" value="1"/>
</dbReference>
<dbReference type="NCBIfam" id="NF009557">
    <property type="entry name" value="PRK13009.1"/>
    <property type="match status" value="1"/>
</dbReference>
<dbReference type="PANTHER" id="PTHR43808">
    <property type="entry name" value="ACETYLORNITHINE DEACETYLASE"/>
    <property type="match status" value="1"/>
</dbReference>
<dbReference type="PANTHER" id="PTHR43808:SF31">
    <property type="entry name" value="N-ACETYL-L-CITRULLINE DEACETYLASE"/>
    <property type="match status" value="1"/>
</dbReference>
<dbReference type="Pfam" id="PF07687">
    <property type="entry name" value="M20_dimer"/>
    <property type="match status" value="1"/>
</dbReference>
<dbReference type="Pfam" id="PF01546">
    <property type="entry name" value="Peptidase_M20"/>
    <property type="match status" value="1"/>
</dbReference>
<dbReference type="SUPFAM" id="SSF55031">
    <property type="entry name" value="Bacterial exopeptidase dimerisation domain"/>
    <property type="match status" value="1"/>
</dbReference>
<dbReference type="SUPFAM" id="SSF53187">
    <property type="entry name" value="Zn-dependent exopeptidases"/>
    <property type="match status" value="1"/>
</dbReference>
<dbReference type="PROSITE" id="PS00759">
    <property type="entry name" value="ARGE_DAPE_CPG2_2"/>
    <property type="match status" value="1"/>
</dbReference>
<proteinExistence type="inferred from homology"/>
<reference key="1">
    <citation type="journal article" date="2002" name="Environ. Microbiol.">
        <title>Complete genome sequence and comparative analysis of the metabolically versatile Pseudomonas putida KT2440.</title>
        <authorList>
            <person name="Nelson K.E."/>
            <person name="Weinel C."/>
            <person name="Paulsen I.T."/>
            <person name="Dodson R.J."/>
            <person name="Hilbert H."/>
            <person name="Martins dos Santos V.A.P."/>
            <person name="Fouts D.E."/>
            <person name="Gill S.R."/>
            <person name="Pop M."/>
            <person name="Holmes M."/>
            <person name="Brinkac L.M."/>
            <person name="Beanan M.J."/>
            <person name="DeBoy R.T."/>
            <person name="Daugherty S.C."/>
            <person name="Kolonay J.F."/>
            <person name="Madupu R."/>
            <person name="Nelson W.C."/>
            <person name="White O."/>
            <person name="Peterson J.D."/>
            <person name="Khouri H.M."/>
            <person name="Hance I."/>
            <person name="Chris Lee P."/>
            <person name="Holtzapple E.K."/>
            <person name="Scanlan D."/>
            <person name="Tran K."/>
            <person name="Moazzez A."/>
            <person name="Utterback T.R."/>
            <person name="Rizzo M."/>
            <person name="Lee K."/>
            <person name="Kosack D."/>
            <person name="Moestl D."/>
            <person name="Wedler H."/>
            <person name="Lauber J."/>
            <person name="Stjepandic D."/>
            <person name="Hoheisel J."/>
            <person name="Straetz M."/>
            <person name="Heim S."/>
            <person name="Kiewitz C."/>
            <person name="Eisen J.A."/>
            <person name="Timmis K.N."/>
            <person name="Duesterhoeft A."/>
            <person name="Tuemmler B."/>
            <person name="Fraser C.M."/>
        </authorList>
    </citation>
    <scope>NUCLEOTIDE SEQUENCE [LARGE SCALE GENOMIC DNA]</scope>
    <source>
        <strain>ATCC 47054 / DSM 6125 / CFBP 8728 / NCIMB 11950 / KT2440</strain>
    </source>
</reference>
<evidence type="ECO:0000255" key="1">
    <source>
        <dbReference type="HAMAP-Rule" id="MF_01690"/>
    </source>
</evidence>